<organism>
    <name type="scientific">Cereibacter sphaeroides (strain ATCC 17023 / DSM 158 / JCM 6121 / CCUG 31486 / LMG 2827 / NBRC 12203 / NCIMB 8253 / ATH 2.4.1.)</name>
    <name type="common">Rhodobacter sphaeroides</name>
    <dbReference type="NCBI Taxonomy" id="272943"/>
    <lineage>
        <taxon>Bacteria</taxon>
        <taxon>Pseudomonadati</taxon>
        <taxon>Pseudomonadota</taxon>
        <taxon>Alphaproteobacteria</taxon>
        <taxon>Rhodobacterales</taxon>
        <taxon>Paracoccaceae</taxon>
        <taxon>Cereibacter</taxon>
    </lineage>
</organism>
<keyword id="KW-0067">ATP-binding</keyword>
<keyword id="KW-0143">Chaperone</keyword>
<keyword id="KW-0963">Cytoplasm</keyword>
<keyword id="KW-0413">Isomerase</keyword>
<keyword id="KW-0547">Nucleotide-binding</keyword>
<keyword id="KW-1185">Reference proteome</keyword>
<accession>Q3IW60</accession>
<sequence length="542" mass="57009">MSAKEVRFGTDARGRMLKGINTLADTVKITLGPKGRNVILDTSYGAPRITKDGVTVAREIELSDRFENVGAQMVKEVASRTNEEAGDGTTTATVLAQAIAKEGMKAVAAGMNPMDLKRGIDRAVAIVIAEIRSMSRPVGDSAEIAKVGALSANGEAAIGRQIADAMAKVGTAGVIKVEENKGLETETEVVEGMQFDRGYLSPYFITHAQKMVVELDDCAILLHEGKLTSLASMVPLLEAVVQAEKQLLVVAEDVEGEALTTLVVNKLRGGLKVAAAKAPGFGDGRAAMLEDLAVLTGAHLISAELGTKLETVTLDMLGFAKKVVLTKDSTILIDSAGDKAAIASRIGQIRNQIEDTTSAYNKEKLQERLARLAGGVAVIRVGGATEIEVKERRDRVEDTLNATRAAVQEGVVPGGGAALIHAGKALAGLKGDNPDQDAGIKIIRRAIQAPLRQIADNAGIDGSVVAGKVIENDSATFGFDAQLETYGDMLQAGIIDPTKVVRIALEDAASIAGLLITTEVIIAHKPERGERMSQMDEMGGMM</sequence>
<evidence type="ECO:0000255" key="1">
    <source>
        <dbReference type="HAMAP-Rule" id="MF_00600"/>
    </source>
</evidence>
<name>CH602_CERS4</name>
<feature type="chain" id="PRO_0000256965" description="Chaperonin GroEL 2">
    <location>
        <begin position="1"/>
        <end position="542"/>
    </location>
</feature>
<feature type="binding site" evidence="1">
    <location>
        <begin position="30"/>
        <end position="33"/>
    </location>
    <ligand>
        <name>ATP</name>
        <dbReference type="ChEBI" id="CHEBI:30616"/>
    </ligand>
</feature>
<feature type="binding site" evidence="1">
    <location>
        <position position="51"/>
    </location>
    <ligand>
        <name>ATP</name>
        <dbReference type="ChEBI" id="CHEBI:30616"/>
    </ligand>
</feature>
<feature type="binding site" evidence="1">
    <location>
        <begin position="87"/>
        <end position="91"/>
    </location>
    <ligand>
        <name>ATP</name>
        <dbReference type="ChEBI" id="CHEBI:30616"/>
    </ligand>
</feature>
<feature type="binding site" evidence="1">
    <location>
        <position position="415"/>
    </location>
    <ligand>
        <name>ATP</name>
        <dbReference type="ChEBI" id="CHEBI:30616"/>
    </ligand>
</feature>
<feature type="binding site" evidence="1">
    <location>
        <position position="496"/>
    </location>
    <ligand>
        <name>ATP</name>
        <dbReference type="ChEBI" id="CHEBI:30616"/>
    </ligand>
</feature>
<dbReference type="EC" id="5.6.1.7" evidence="1"/>
<dbReference type="EMBL" id="CP000144">
    <property type="protein sequence ID" value="ABA81224.1"/>
    <property type="molecule type" value="Genomic_DNA"/>
</dbReference>
<dbReference type="RefSeq" id="WP_011339465.1">
    <property type="nucleotide sequence ID" value="NC_007494.2"/>
</dbReference>
<dbReference type="RefSeq" id="YP_355125.1">
    <property type="nucleotide sequence ID" value="NC_007494.2"/>
</dbReference>
<dbReference type="SMR" id="Q3IW60"/>
<dbReference type="STRING" id="272943.RSP_3615"/>
<dbReference type="EnsemblBacteria" id="ABA81224">
    <property type="protein sequence ID" value="ABA81224"/>
    <property type="gene ID" value="RSP_3615"/>
</dbReference>
<dbReference type="GeneID" id="3721779"/>
<dbReference type="KEGG" id="rsp:RSP_3615"/>
<dbReference type="PATRIC" id="fig|272943.9.peg.4059"/>
<dbReference type="eggNOG" id="COG0459">
    <property type="taxonomic scope" value="Bacteria"/>
</dbReference>
<dbReference type="OrthoDB" id="9766614at2"/>
<dbReference type="PhylomeDB" id="Q3IW60"/>
<dbReference type="Proteomes" id="UP000002703">
    <property type="component" value="Chromosome 2"/>
</dbReference>
<dbReference type="GO" id="GO:0005737">
    <property type="term" value="C:cytoplasm"/>
    <property type="evidence" value="ECO:0007669"/>
    <property type="project" value="UniProtKB-SubCell"/>
</dbReference>
<dbReference type="GO" id="GO:0005524">
    <property type="term" value="F:ATP binding"/>
    <property type="evidence" value="ECO:0007669"/>
    <property type="project" value="UniProtKB-UniRule"/>
</dbReference>
<dbReference type="GO" id="GO:0140662">
    <property type="term" value="F:ATP-dependent protein folding chaperone"/>
    <property type="evidence" value="ECO:0007669"/>
    <property type="project" value="InterPro"/>
</dbReference>
<dbReference type="GO" id="GO:0016853">
    <property type="term" value="F:isomerase activity"/>
    <property type="evidence" value="ECO:0007669"/>
    <property type="project" value="UniProtKB-KW"/>
</dbReference>
<dbReference type="GO" id="GO:0051082">
    <property type="term" value="F:unfolded protein binding"/>
    <property type="evidence" value="ECO:0007669"/>
    <property type="project" value="UniProtKB-UniRule"/>
</dbReference>
<dbReference type="GO" id="GO:0042026">
    <property type="term" value="P:protein refolding"/>
    <property type="evidence" value="ECO:0007669"/>
    <property type="project" value="UniProtKB-UniRule"/>
</dbReference>
<dbReference type="CDD" id="cd03344">
    <property type="entry name" value="GroEL"/>
    <property type="match status" value="1"/>
</dbReference>
<dbReference type="FunFam" id="1.10.560.10:FF:000001">
    <property type="entry name" value="60 kDa chaperonin"/>
    <property type="match status" value="1"/>
</dbReference>
<dbReference type="FunFam" id="3.50.7.10:FF:000001">
    <property type="entry name" value="60 kDa chaperonin"/>
    <property type="match status" value="1"/>
</dbReference>
<dbReference type="Gene3D" id="3.50.7.10">
    <property type="entry name" value="GroEL"/>
    <property type="match status" value="1"/>
</dbReference>
<dbReference type="Gene3D" id="1.10.560.10">
    <property type="entry name" value="GroEL-like equatorial domain"/>
    <property type="match status" value="1"/>
</dbReference>
<dbReference type="Gene3D" id="3.30.260.10">
    <property type="entry name" value="TCP-1-like chaperonin intermediate domain"/>
    <property type="match status" value="1"/>
</dbReference>
<dbReference type="HAMAP" id="MF_00600">
    <property type="entry name" value="CH60"/>
    <property type="match status" value="1"/>
</dbReference>
<dbReference type="InterPro" id="IPR018370">
    <property type="entry name" value="Chaperonin_Cpn60_CS"/>
</dbReference>
<dbReference type="InterPro" id="IPR001844">
    <property type="entry name" value="Cpn60/GroEL"/>
</dbReference>
<dbReference type="InterPro" id="IPR002423">
    <property type="entry name" value="Cpn60/GroEL/TCP-1"/>
</dbReference>
<dbReference type="InterPro" id="IPR027409">
    <property type="entry name" value="GroEL-like_apical_dom_sf"/>
</dbReference>
<dbReference type="InterPro" id="IPR027413">
    <property type="entry name" value="GROEL-like_equatorial_sf"/>
</dbReference>
<dbReference type="InterPro" id="IPR027410">
    <property type="entry name" value="TCP-1-like_intermed_sf"/>
</dbReference>
<dbReference type="NCBIfam" id="TIGR02348">
    <property type="entry name" value="GroEL"/>
    <property type="match status" value="1"/>
</dbReference>
<dbReference type="NCBIfam" id="NF000592">
    <property type="entry name" value="PRK00013.1"/>
    <property type="match status" value="1"/>
</dbReference>
<dbReference type="NCBIfam" id="NF009487">
    <property type="entry name" value="PRK12849.1"/>
    <property type="match status" value="1"/>
</dbReference>
<dbReference type="NCBIfam" id="NF009488">
    <property type="entry name" value="PRK12850.1"/>
    <property type="match status" value="1"/>
</dbReference>
<dbReference type="NCBIfam" id="NF009489">
    <property type="entry name" value="PRK12851.1"/>
    <property type="match status" value="1"/>
</dbReference>
<dbReference type="PANTHER" id="PTHR45633">
    <property type="entry name" value="60 KDA HEAT SHOCK PROTEIN, MITOCHONDRIAL"/>
    <property type="match status" value="1"/>
</dbReference>
<dbReference type="Pfam" id="PF00118">
    <property type="entry name" value="Cpn60_TCP1"/>
    <property type="match status" value="1"/>
</dbReference>
<dbReference type="PRINTS" id="PR00298">
    <property type="entry name" value="CHAPERONIN60"/>
</dbReference>
<dbReference type="SUPFAM" id="SSF52029">
    <property type="entry name" value="GroEL apical domain-like"/>
    <property type="match status" value="1"/>
</dbReference>
<dbReference type="SUPFAM" id="SSF48592">
    <property type="entry name" value="GroEL equatorial domain-like"/>
    <property type="match status" value="1"/>
</dbReference>
<dbReference type="SUPFAM" id="SSF54849">
    <property type="entry name" value="GroEL-intermediate domain like"/>
    <property type="match status" value="1"/>
</dbReference>
<dbReference type="PROSITE" id="PS00296">
    <property type="entry name" value="CHAPERONINS_CPN60"/>
    <property type="match status" value="1"/>
</dbReference>
<comment type="function">
    <text evidence="1">Together with its co-chaperonin GroES, plays an essential role in assisting protein folding. The GroEL-GroES system forms a nano-cage that allows encapsulation of the non-native substrate proteins and provides a physical environment optimized to promote and accelerate protein folding.</text>
</comment>
<comment type="catalytic activity">
    <reaction evidence="1">
        <text>ATP + H2O + a folded polypeptide = ADP + phosphate + an unfolded polypeptide.</text>
        <dbReference type="EC" id="5.6.1.7"/>
    </reaction>
</comment>
<comment type="subunit">
    <text evidence="1">Forms a cylinder of 14 subunits composed of two heptameric rings stacked back-to-back. Interacts with the co-chaperonin GroES.</text>
</comment>
<comment type="subcellular location">
    <subcellularLocation>
        <location evidence="1">Cytoplasm</location>
    </subcellularLocation>
</comment>
<comment type="similarity">
    <text evidence="1">Belongs to the chaperonin (HSP60) family.</text>
</comment>
<protein>
    <recommendedName>
        <fullName evidence="1">Chaperonin GroEL 2</fullName>
        <ecNumber evidence="1">5.6.1.7</ecNumber>
    </recommendedName>
    <alternativeName>
        <fullName evidence="1">60 kDa chaperonin 2</fullName>
    </alternativeName>
    <alternativeName>
        <fullName evidence="1">Chaperonin-60 2</fullName>
        <shortName evidence="1">Cpn60 2</shortName>
    </alternativeName>
</protein>
<reference key="1">
    <citation type="submission" date="2005-09" db="EMBL/GenBank/DDBJ databases">
        <title>Complete sequence of chromosome 2 of Rhodobacter sphaeroides 2.4.1.</title>
        <authorList>
            <person name="Copeland A."/>
            <person name="Lucas S."/>
            <person name="Lapidus A."/>
            <person name="Barry K."/>
            <person name="Detter J.C."/>
            <person name="Glavina T."/>
            <person name="Hammon N."/>
            <person name="Israni S."/>
            <person name="Pitluck S."/>
            <person name="Richardson P."/>
            <person name="Mackenzie C."/>
            <person name="Choudhary M."/>
            <person name="Larimer F."/>
            <person name="Hauser L.J."/>
            <person name="Land M."/>
            <person name="Donohue T.J."/>
            <person name="Kaplan S."/>
        </authorList>
    </citation>
    <scope>NUCLEOTIDE SEQUENCE [LARGE SCALE GENOMIC DNA]</scope>
    <source>
        <strain>ATCC 17023 / DSM 158 / JCM 6121 / CCUG 31486 / LMG 2827 / NBRC 12203 / NCIMB 8253 / ATH 2.4.1.</strain>
    </source>
</reference>
<gene>
    <name evidence="1" type="primary">groEL2</name>
    <name evidence="1" type="synonym">groL2</name>
    <name type="ordered locus">RHOS4_36560</name>
    <name type="ORF">RSP_3615</name>
</gene>
<proteinExistence type="inferred from homology"/>